<protein>
    <recommendedName>
        <fullName evidence="1">UPF0283 membrane protein R01807</fullName>
    </recommendedName>
</protein>
<dbReference type="EMBL" id="AL591688">
    <property type="protein sequence ID" value="CAC46386.1"/>
    <property type="molecule type" value="Genomic_DNA"/>
</dbReference>
<dbReference type="RefSeq" id="NP_385913.1">
    <property type="nucleotide sequence ID" value="NC_003047.1"/>
</dbReference>
<dbReference type="RefSeq" id="WP_010969485.1">
    <property type="nucleotide sequence ID" value="NC_003047.1"/>
</dbReference>
<dbReference type="EnsemblBacteria" id="CAC46386">
    <property type="protein sequence ID" value="CAC46386"/>
    <property type="gene ID" value="SMc00466"/>
</dbReference>
<dbReference type="KEGG" id="sme:SMc00466"/>
<dbReference type="PATRIC" id="fig|266834.11.peg.3249"/>
<dbReference type="eggNOG" id="COG3768">
    <property type="taxonomic scope" value="Bacteria"/>
</dbReference>
<dbReference type="HOGENOM" id="CLU_057693_1_0_5"/>
<dbReference type="OrthoDB" id="9816060at2"/>
<dbReference type="Proteomes" id="UP000001976">
    <property type="component" value="Chromosome"/>
</dbReference>
<dbReference type="GO" id="GO:0005886">
    <property type="term" value="C:plasma membrane"/>
    <property type="evidence" value="ECO:0007669"/>
    <property type="project" value="UniProtKB-SubCell"/>
</dbReference>
<dbReference type="HAMAP" id="MF_01085">
    <property type="entry name" value="UPF0283"/>
    <property type="match status" value="1"/>
</dbReference>
<dbReference type="InterPro" id="IPR021147">
    <property type="entry name" value="DUF697"/>
</dbReference>
<dbReference type="InterPro" id="IPR006507">
    <property type="entry name" value="UPF0283"/>
</dbReference>
<dbReference type="NCBIfam" id="TIGR01620">
    <property type="entry name" value="hyp_HI0043"/>
    <property type="match status" value="1"/>
</dbReference>
<dbReference type="PANTHER" id="PTHR39342">
    <property type="entry name" value="UPF0283 MEMBRANE PROTEIN YCJF"/>
    <property type="match status" value="1"/>
</dbReference>
<dbReference type="PANTHER" id="PTHR39342:SF1">
    <property type="entry name" value="UPF0283 MEMBRANE PROTEIN YCJF"/>
    <property type="match status" value="1"/>
</dbReference>
<dbReference type="Pfam" id="PF05128">
    <property type="entry name" value="DUF697"/>
    <property type="match status" value="1"/>
</dbReference>
<evidence type="ECO:0000255" key="1">
    <source>
        <dbReference type="HAMAP-Rule" id="MF_01085"/>
    </source>
</evidence>
<proteinExistence type="inferred from homology"/>
<name>Y1807_RHIME</name>
<keyword id="KW-0997">Cell inner membrane</keyword>
<keyword id="KW-1003">Cell membrane</keyword>
<keyword id="KW-0472">Membrane</keyword>
<keyword id="KW-1185">Reference proteome</keyword>
<keyword id="KW-0812">Transmembrane</keyword>
<keyword id="KW-1133">Transmembrane helix</keyword>
<reference key="1">
    <citation type="journal article" date="2001" name="Proc. Natl. Acad. Sci. U.S.A.">
        <title>Analysis of the chromosome sequence of the legume symbiont Sinorhizobium meliloti strain 1021.</title>
        <authorList>
            <person name="Capela D."/>
            <person name="Barloy-Hubler F."/>
            <person name="Gouzy J."/>
            <person name="Bothe G."/>
            <person name="Ampe F."/>
            <person name="Batut J."/>
            <person name="Boistard P."/>
            <person name="Becker A."/>
            <person name="Boutry M."/>
            <person name="Cadieu E."/>
            <person name="Dreano S."/>
            <person name="Gloux S."/>
            <person name="Godrie T."/>
            <person name="Goffeau A."/>
            <person name="Kahn D."/>
            <person name="Kiss E."/>
            <person name="Lelaure V."/>
            <person name="Masuy D."/>
            <person name="Pohl T."/>
            <person name="Portetelle D."/>
            <person name="Puehler A."/>
            <person name="Purnelle B."/>
            <person name="Ramsperger U."/>
            <person name="Renard C."/>
            <person name="Thebault P."/>
            <person name="Vandenbol M."/>
            <person name="Weidner S."/>
            <person name="Galibert F."/>
        </authorList>
    </citation>
    <scope>NUCLEOTIDE SEQUENCE [LARGE SCALE GENOMIC DNA]</scope>
    <source>
        <strain>1021</strain>
    </source>
</reference>
<reference key="2">
    <citation type="journal article" date="2001" name="Science">
        <title>The composite genome of the legume symbiont Sinorhizobium meliloti.</title>
        <authorList>
            <person name="Galibert F."/>
            <person name="Finan T.M."/>
            <person name="Long S.R."/>
            <person name="Puehler A."/>
            <person name="Abola P."/>
            <person name="Ampe F."/>
            <person name="Barloy-Hubler F."/>
            <person name="Barnett M.J."/>
            <person name="Becker A."/>
            <person name="Boistard P."/>
            <person name="Bothe G."/>
            <person name="Boutry M."/>
            <person name="Bowser L."/>
            <person name="Buhrmester J."/>
            <person name="Cadieu E."/>
            <person name="Capela D."/>
            <person name="Chain P."/>
            <person name="Cowie A."/>
            <person name="Davis R.W."/>
            <person name="Dreano S."/>
            <person name="Federspiel N.A."/>
            <person name="Fisher R.F."/>
            <person name="Gloux S."/>
            <person name="Godrie T."/>
            <person name="Goffeau A."/>
            <person name="Golding B."/>
            <person name="Gouzy J."/>
            <person name="Gurjal M."/>
            <person name="Hernandez-Lucas I."/>
            <person name="Hong A."/>
            <person name="Huizar L."/>
            <person name="Hyman R.W."/>
            <person name="Jones T."/>
            <person name="Kahn D."/>
            <person name="Kahn M.L."/>
            <person name="Kalman S."/>
            <person name="Keating D.H."/>
            <person name="Kiss E."/>
            <person name="Komp C."/>
            <person name="Lelaure V."/>
            <person name="Masuy D."/>
            <person name="Palm C."/>
            <person name="Peck M.C."/>
            <person name="Pohl T.M."/>
            <person name="Portetelle D."/>
            <person name="Purnelle B."/>
            <person name="Ramsperger U."/>
            <person name="Surzycki R."/>
            <person name="Thebault P."/>
            <person name="Vandenbol M."/>
            <person name="Vorhoelter F.J."/>
            <person name="Weidner S."/>
            <person name="Wells D.H."/>
            <person name="Wong K."/>
            <person name="Yeh K.-C."/>
            <person name="Batut J."/>
        </authorList>
    </citation>
    <scope>NUCLEOTIDE SEQUENCE [LARGE SCALE GENOMIC DNA]</scope>
    <source>
        <strain>1021</strain>
    </source>
</reference>
<comment type="subcellular location">
    <subcellularLocation>
        <location evidence="1">Cell inner membrane</location>
        <topology evidence="1">Multi-pass membrane protein</topology>
    </subcellularLocation>
</comment>
<comment type="similarity">
    <text evidence="1">Belongs to the UPF0283 family.</text>
</comment>
<organism>
    <name type="scientific">Rhizobium meliloti (strain 1021)</name>
    <name type="common">Ensifer meliloti</name>
    <name type="synonym">Sinorhizobium meliloti</name>
    <dbReference type="NCBI Taxonomy" id="266834"/>
    <lineage>
        <taxon>Bacteria</taxon>
        <taxon>Pseudomonadati</taxon>
        <taxon>Pseudomonadota</taxon>
        <taxon>Alphaproteobacteria</taxon>
        <taxon>Hyphomicrobiales</taxon>
        <taxon>Rhizobiaceae</taxon>
        <taxon>Sinorhizobium/Ensifer group</taxon>
        <taxon>Sinorhizobium</taxon>
    </lineage>
</organism>
<accession>Q92PF5</accession>
<sequence length="359" mass="38309">MSDDFNDRRRRPAAFSVEAEEAIEREMEQTPRRAPGSFSEKVVMTPDAEDPFIGTTAAVESLNLPEAMPRRRRLSFGKIAAGAFGILISLAVGLWIDRLVRDLFSRADWLGYGAVAVVAIGVIAFLIVVAREVFGMMQLTAVQTLKADLAAAAASGKTQAARAATARLVHLLAGNPRTAKGRARLAETEGDIIDAPHLIELTERELLAPLDREARRIILGAAKRVSIVTAVSPRALVDLGYVIYESARMIRAMAELYGGRPGTLGLLRLMRDVIAHLAVTGSIAVGDSLIQQILGHGLASKLSARLGEGVINGLMTARIGIAAMDLCRPMPFRALKRPSIGDFLGDLAPGTARSEGSAG</sequence>
<feature type="chain" id="PRO_0000214181" description="UPF0283 membrane protein R01807">
    <location>
        <begin position="1"/>
        <end position="359"/>
    </location>
</feature>
<feature type="transmembrane region" description="Helical" evidence="1">
    <location>
        <begin position="76"/>
        <end position="96"/>
    </location>
</feature>
<feature type="transmembrane region" description="Helical" evidence="1">
    <location>
        <begin position="109"/>
        <end position="129"/>
    </location>
</feature>
<gene>
    <name type="ordered locus">R01807</name>
    <name type="ORF">SMc00466</name>
</gene>